<organism>
    <name type="scientific">Bos taurus</name>
    <name type="common">Bovine</name>
    <dbReference type="NCBI Taxonomy" id="9913"/>
    <lineage>
        <taxon>Eukaryota</taxon>
        <taxon>Metazoa</taxon>
        <taxon>Chordata</taxon>
        <taxon>Craniata</taxon>
        <taxon>Vertebrata</taxon>
        <taxon>Euteleostomi</taxon>
        <taxon>Mammalia</taxon>
        <taxon>Eutheria</taxon>
        <taxon>Laurasiatheria</taxon>
        <taxon>Artiodactyla</taxon>
        <taxon>Ruminantia</taxon>
        <taxon>Pecora</taxon>
        <taxon>Bovidae</taxon>
        <taxon>Bovinae</taxon>
        <taxon>Bos</taxon>
    </lineage>
</organism>
<accession>Q06599</accession>
<accession>A4IFT5</accession>
<accession>A9QWR7</accession>
<accession>O18779</accession>
<accession>Q27978</accession>
<feature type="chain" id="PRO_0000034403" description="Tumor necrosis factor, membrane form">
    <location>
        <begin position="1"/>
        <end position="234"/>
    </location>
</feature>
<feature type="chain" id="PRO_0000417179" description="Intracellular domain 1" evidence="1">
    <location>
        <begin position="1"/>
        <end position="39"/>
    </location>
</feature>
<feature type="chain" id="PRO_0000417180" description="Intracellular domain 2" evidence="1">
    <location>
        <begin position="1"/>
        <end position="35"/>
    </location>
</feature>
<feature type="chain" id="PRO_0000417181" description="C-domain 1" evidence="1">
    <location>
        <begin position="50"/>
        <end status="unknown"/>
    </location>
</feature>
<feature type="chain" id="PRO_0000417182" description="C-domain 2" evidence="1">
    <location>
        <begin position="52"/>
        <end status="unknown"/>
    </location>
</feature>
<feature type="chain" id="PRO_0000034404" description="Tumor necrosis factor, soluble form">
    <location>
        <begin position="78"/>
        <end position="234"/>
    </location>
</feature>
<feature type="topological domain" description="Cytoplasmic" evidence="4">
    <location>
        <begin position="1"/>
        <end position="35"/>
    </location>
</feature>
<feature type="transmembrane region" description="Helical; Signal-anchor for type II membrane protein" evidence="4">
    <location>
        <begin position="36"/>
        <end position="56"/>
    </location>
</feature>
<feature type="topological domain" description="Extracellular" evidence="4">
    <location>
        <begin position="57"/>
        <end position="234"/>
    </location>
</feature>
<feature type="domain" description="THD" evidence="5">
    <location>
        <begin position="89"/>
        <end position="234"/>
    </location>
</feature>
<feature type="site" description="Cleavage; by SPPL2A or SPPL2B" evidence="1">
    <location>
        <begin position="34"/>
        <end position="35"/>
    </location>
</feature>
<feature type="site" description="Cleavage; by SPPL2A or SPPL2B" evidence="1">
    <location>
        <begin position="39"/>
        <end position="40"/>
    </location>
</feature>
<feature type="site" description="Cleavage; by SPPL2A or SPPL2B" evidence="1">
    <location>
        <begin position="49"/>
        <end position="50"/>
    </location>
</feature>
<feature type="site" description="Cleavage; by SPPL2A or SPPL2B" evidence="1">
    <location>
        <begin position="51"/>
        <end position="52"/>
    </location>
</feature>
<feature type="site" description="Cleavage; by ADAM17" evidence="1">
    <location>
        <begin position="77"/>
        <end position="78"/>
    </location>
</feature>
<feature type="modified residue" description="Phosphoserine; by CK1" evidence="1">
    <location>
        <position position="2"/>
    </location>
</feature>
<feature type="lipid moiety-binding region" description="N6-myristoyl lysine" evidence="2">
    <location>
        <position position="20"/>
    </location>
</feature>
<feature type="glycosylation site" description="O-linked (GalNAc...) serine; in soluble form" evidence="1">
    <location>
        <position position="81"/>
    </location>
</feature>
<feature type="disulfide bond" evidence="5">
    <location>
        <begin position="146"/>
        <end position="178"/>
    </location>
</feature>
<feature type="splice variant" id="VSP_026198" description="In isoform 2." evidence="6">
    <location>
        <position position="63"/>
    </location>
</feature>
<feature type="sequence variant" description="In strain: N'Dama.">
    <original>F</original>
    <variation>C</variation>
    <location>
        <position position="48"/>
    </location>
</feature>
<feature type="sequence conflict" description="In Ref. 3; AAN76506." evidence="7" ref="3">
    <original>M</original>
    <variation>V</variation>
    <location>
        <position position="114"/>
    </location>
</feature>
<feature type="sequence conflict" description="In Ref. 3; AAN76506." evidence="7" ref="3">
    <original>K</original>
    <variation>R</variation>
    <location>
        <position position="167"/>
    </location>
</feature>
<keyword id="KW-0025">Alternative splicing</keyword>
<keyword id="KW-1003">Cell membrane</keyword>
<keyword id="KW-0202">Cytokine</keyword>
<keyword id="KW-1015">Disulfide bond</keyword>
<keyword id="KW-0325">Glycoprotein</keyword>
<keyword id="KW-0449">Lipoprotein</keyword>
<keyword id="KW-0472">Membrane</keyword>
<keyword id="KW-0519">Myristate</keyword>
<keyword id="KW-0597">Phosphoprotein</keyword>
<keyword id="KW-1185">Reference proteome</keyword>
<keyword id="KW-0964">Secreted</keyword>
<keyword id="KW-0735">Signal-anchor</keyword>
<keyword id="KW-0812">Transmembrane</keyword>
<keyword id="KW-1133">Transmembrane helix</keyword>
<name>TNFA_BOVIN</name>
<sequence>MSTKSMIRDVELAEEVLSEKAGGPQGSRSCLCLSLFSFLLVAGATTLFCLLHFGVIGPQREEQSPGGPSINSPLVQTLRSSSQASSNKPVAHVVADINSPGQLRWWDSYANALMANGVKLEDNQLVVPADGLYLIYSQVLFRGQGCPSTPLFLTHTISRIAVSYQTKVNILSAIKSPCHRETPEWAEAKPWYEPIYQGGVFQLEKGDRLSAEINLPDYLDYAESGQVYFGIIAL</sequence>
<evidence type="ECO:0000250" key="1"/>
<evidence type="ECO:0000250" key="2">
    <source>
        <dbReference type="UniProtKB" id="P01375"/>
    </source>
</evidence>
<evidence type="ECO:0000250" key="3">
    <source>
        <dbReference type="UniProtKB" id="P06804"/>
    </source>
</evidence>
<evidence type="ECO:0000255" key="4"/>
<evidence type="ECO:0000255" key="5">
    <source>
        <dbReference type="PROSITE-ProRule" id="PRU01387"/>
    </source>
</evidence>
<evidence type="ECO:0000303" key="6">
    <source ref="4"/>
</evidence>
<evidence type="ECO:0000305" key="7"/>
<protein>
    <recommendedName>
        <fullName>Tumor necrosis factor</fullName>
    </recommendedName>
    <alternativeName>
        <fullName>Cachectin</fullName>
    </alternativeName>
    <alternativeName>
        <fullName>TNF-alpha</fullName>
    </alternativeName>
    <alternativeName>
        <fullName>Tumor necrosis factor ligand superfamily member 2</fullName>
        <shortName>TNF-a</shortName>
    </alternativeName>
    <component>
        <recommendedName>
            <fullName>Tumor necrosis factor, membrane form</fullName>
        </recommendedName>
        <alternativeName>
            <fullName>N-terminal fragment</fullName>
            <shortName>NTF</shortName>
        </alternativeName>
    </component>
    <component>
        <recommendedName>
            <fullName>Intracellular domain 1</fullName>
            <shortName>ICD1</shortName>
        </recommendedName>
    </component>
    <component>
        <recommendedName>
            <fullName>Intracellular domain 2</fullName>
            <shortName>ICD2</shortName>
        </recommendedName>
    </component>
    <component>
        <recommendedName>
            <fullName>C-domain 1</fullName>
        </recommendedName>
    </component>
    <component>
        <recommendedName>
            <fullName>C-domain 2</fullName>
        </recommendedName>
    </component>
    <component>
        <recommendedName>
            <fullName>Tumor necrosis factor, soluble form</fullName>
        </recommendedName>
    </component>
</protein>
<gene>
    <name type="primary">TNF</name>
    <name type="synonym">TNFA</name>
    <name type="synonym">TNFSF2</name>
</gene>
<reference key="1">
    <citation type="journal article" date="1993" name="Cytokine">
        <title>Cloning and characterization of the tandemly arranged bovine lymphotoxin and tumour necrosis factor-alpha genes.</title>
        <authorList>
            <person name="Cludts I."/>
            <person name="Cleuter Y."/>
            <person name="Kettmann R."/>
            <person name="Burny A."/>
            <person name="Droogmans L."/>
        </authorList>
    </citation>
    <scope>NUCLEOTIDE SEQUENCE [GENOMIC DNA] (ISOFORM 2)</scope>
</reference>
<reference key="2">
    <citation type="submission" date="1997-07" db="EMBL/GenBank/DDBJ databases">
        <title>Bovine TNF-alpha gene.</title>
        <authorList>
            <person name="Iraqi F."/>
        </authorList>
    </citation>
    <scope>NUCLEOTIDE SEQUENCE [GENOMIC DNA] (ISOFORM 2)</scope>
    <source>
        <strain>Boran</strain>
        <strain>N'Dama</strain>
    </source>
</reference>
<reference key="3">
    <citation type="submission" date="2001-02" db="EMBL/GenBank/DDBJ databases">
        <authorList>
            <person name="Ahn J."/>
        </authorList>
    </citation>
    <scope>NUCLEOTIDE SEQUENCE [MRNA] (ISOFORM 1)</scope>
</reference>
<reference key="4">
    <citation type="submission" date="2007-11" db="EMBL/GenBank/DDBJ databases">
        <title>U.S. veterinary immune reagent network: expressed bovine gene sequences.</title>
        <authorList>
            <consortium name="U.S. Veterinary Immune Reagent Network"/>
            <person name="Hudgens T."/>
            <person name="Tompkins D."/>
            <person name="Baldwin C.L."/>
        </authorList>
    </citation>
    <scope>NUCLEOTIDE SEQUENCE [LARGE SCALE MRNA] (ISOFORM 2)</scope>
    <source>
        <strain>Belted Galloway</strain>
        <tissue>Peripheral blood</tissue>
    </source>
</reference>
<reference key="5">
    <citation type="submission" date="2007-03" db="EMBL/GenBank/DDBJ databases">
        <authorList>
            <consortium name="NIH - Mammalian Gene Collection (MGC) project"/>
        </authorList>
    </citation>
    <scope>NUCLEOTIDE SEQUENCE [LARGE SCALE MRNA] (ISOFORM 1)</scope>
    <source>
        <strain>Hereford</strain>
        <tissue>Thymus</tissue>
    </source>
</reference>
<reference key="6">
    <citation type="journal article" date="1995" name="Immunogenetics">
        <title>Cloning of two members of the TNF-superfamily in cattle: CD40 ligand and tumor necrosis factor alpha.</title>
        <authorList>
            <person name="Mertens B.E.L.C."/>
            <person name="Muriuki M."/>
            <person name="Gaidulis L."/>
        </authorList>
    </citation>
    <scope>NUCLEOTIDE SEQUENCE [MRNA] OF 50-233 (ISOFORM 1)</scope>
    <source>
        <tissue>Blood</tissue>
    </source>
</reference>
<reference key="7">
    <citation type="journal article" date="1997" name="J. Anim. Sci.">
        <title>Rapid communication: single strand conformational polymorphism (SSCP) of bovine tumor necrosis factor alpha.</title>
        <authorList>
            <person name="Dietz A.B."/>
            <person name="Neibergs H.L."/>
            <person name="Womack J.E."/>
            <person name="Kehrli M.E. Jr."/>
        </authorList>
    </citation>
    <scope>NUCLEOTIDE SEQUENCE [GENOMIC DNA] OF 91-193</scope>
    <source>
        <strain>Holstein</strain>
    </source>
</reference>
<proteinExistence type="evidence at transcript level"/>
<comment type="function">
    <text evidence="2 3">Cytokine that binds to TNFRSF1A/TNFR1 and TNFRSF1B/TNFBR. It is mainly secreted by macrophages and can induce cell death of certain tumor cell lines. It is potent pyrogen causing fever by direct action or by stimulation of interleukin-1 secretion and is implicated in the induction of cachexia, Under certain conditions it can stimulate cell proliferation and induce cell differentiation (By similarity). Induces insulin resistance in adipocytes via inhibition of insulin-induced IRS1 tyrosine phosphorylation and insulin-induced glucose uptake. Induces GKAP42 protein degradation in adipocytes which is partially responsible for TNF-induced insulin resistance (By similarity). Plays a role in angiogenesis by inducing VEGF production synergistically with IL1B and IL6 (By similarity). Promotes osteoclastogenesis and therefore mediates bone resorption (By similarity).</text>
</comment>
<comment type="function">
    <text evidence="2">The TNF intracellular domain (ICD) form induces IL12 production in dendritic cells.</text>
</comment>
<comment type="subunit">
    <text evidence="1">Homotrimer. Interacts with SPPL2B (By similarity).</text>
</comment>
<comment type="subcellular location">
    <subcellularLocation>
        <location evidence="1">Cell membrane</location>
        <topology evidence="1">Single-pass type II membrane protein</topology>
    </subcellularLocation>
</comment>
<comment type="subcellular location">
    <molecule>Tumor necrosis factor, membrane form</molecule>
    <subcellularLocation>
        <location evidence="1">Membrane</location>
        <topology evidence="1">Single-pass type II membrane protein</topology>
    </subcellularLocation>
</comment>
<comment type="subcellular location">
    <molecule>Tumor necrosis factor, soluble form</molecule>
    <subcellularLocation>
        <location evidence="1">Secreted</location>
    </subcellularLocation>
</comment>
<comment type="subcellular location">
    <molecule>C-domain 1</molecule>
    <subcellularLocation>
        <location evidence="1">Secreted</location>
    </subcellularLocation>
</comment>
<comment type="subcellular location">
    <molecule>C-domain 2</molecule>
    <subcellularLocation>
        <location evidence="1">Secreted</location>
    </subcellularLocation>
</comment>
<comment type="alternative products">
    <event type="alternative splicing"/>
    <isoform>
        <id>Q06599-1</id>
        <name>1</name>
        <sequence type="displayed"/>
    </isoform>
    <isoform>
        <id>Q06599-2</id>
        <name>2</name>
        <sequence type="described" ref="VSP_026198"/>
    </isoform>
</comment>
<comment type="PTM">
    <text evidence="1">The soluble form derives from the membrane form by proteolytic processing. The membrane-bound form is further proteolytically processed by SPPL2A or SPPL2B through regulated intramembrane proteolysis producing TNF intracellular domains (ICD1 and ICD2) released in the cytosol and TNF C-domain 1 and C-domain 2 secreted into the extracellular space (By similarity).</text>
</comment>
<comment type="PTM">
    <text evidence="1">The membrane form, but not the soluble form, is phosphorylated on serine residues. Dephosphorylation of the membrane form occurs by binding to soluble TNFRSF1A/TNFR1 (By similarity).</text>
</comment>
<comment type="PTM">
    <text evidence="1">O-glycosylated; glycans contain galactose, N-acetylgalactosamine and N-acetylneuraminic acid.</text>
</comment>
<comment type="PTM">
    <molecule>Tumor necrosis factor, soluble form</molecule>
    <text evidence="2">The soluble form is demyristoylated by SIRT6, promoting its secretion.</text>
</comment>
<comment type="similarity">
    <text evidence="7">Belongs to the tumor necrosis factor family.</text>
</comment>
<comment type="sequence caution" evidence="7">
    <conflict type="erroneous gene model prediction">
        <sequence resource="EMBL-CDS" id="AAA19573"/>
    </conflict>
</comment>
<dbReference type="EMBL" id="Z14137">
    <property type="protein sequence ID" value="CAA78511.1"/>
    <property type="molecule type" value="Genomic_DNA"/>
</dbReference>
<dbReference type="EMBL" id="AF011926">
    <property type="protein sequence ID" value="AAB84086.1"/>
    <property type="molecule type" value="Genomic_DNA"/>
</dbReference>
<dbReference type="EMBL" id="AF011927">
    <property type="protein sequence ID" value="AAB84087.1"/>
    <property type="molecule type" value="Genomic_DNA"/>
</dbReference>
<dbReference type="EMBL" id="AF348421">
    <property type="protein sequence ID" value="AAN76506.1"/>
    <property type="molecule type" value="mRNA"/>
</dbReference>
<dbReference type="EMBL" id="EU276079">
    <property type="protein sequence ID" value="ABX72077.1"/>
    <property type="molecule type" value="mRNA"/>
</dbReference>
<dbReference type="EMBL" id="BC134755">
    <property type="protein sequence ID" value="AAI34756.1"/>
    <property type="molecule type" value="mRNA"/>
</dbReference>
<dbReference type="EMBL" id="Z48808">
    <property type="protein sequence ID" value="CAA88743.1"/>
    <property type="molecule type" value="mRNA"/>
</dbReference>
<dbReference type="EMBL" id="U11040">
    <property type="protein sequence ID" value="AAA19573.1"/>
    <property type="status" value="ALT_SEQ"/>
    <property type="molecule type" value="Genomic_DNA"/>
</dbReference>
<dbReference type="PIR" id="I46047">
    <property type="entry name" value="S24642"/>
</dbReference>
<dbReference type="RefSeq" id="NP_776391.2">
    <molecule id="Q06599-1"/>
    <property type="nucleotide sequence ID" value="NM_173966.3"/>
</dbReference>
<dbReference type="RefSeq" id="XP_005223653.4">
    <molecule id="Q06599-2"/>
    <property type="nucleotide sequence ID" value="XM_005223596.5"/>
</dbReference>
<dbReference type="SMR" id="Q06599"/>
<dbReference type="FunCoup" id="Q06599">
    <property type="interactions" value="894"/>
</dbReference>
<dbReference type="STRING" id="9913.ENSBTAP00000035682"/>
<dbReference type="GlyCosmos" id="Q06599">
    <property type="glycosylation" value="1 site, No reported glycans"/>
</dbReference>
<dbReference type="GlyGen" id="Q06599">
    <property type="glycosylation" value="1 site"/>
</dbReference>
<dbReference type="PaxDb" id="9913-ENSBTAP00000035682"/>
<dbReference type="GeneID" id="280943"/>
<dbReference type="KEGG" id="bta:280943"/>
<dbReference type="CTD" id="7124"/>
<dbReference type="eggNOG" id="ENOG502S4K8">
    <property type="taxonomic scope" value="Eukaryota"/>
</dbReference>
<dbReference type="HOGENOM" id="CLU_070352_3_1_1"/>
<dbReference type="InParanoid" id="Q06599"/>
<dbReference type="OrthoDB" id="9940698at2759"/>
<dbReference type="TreeFam" id="TF332169"/>
<dbReference type="Proteomes" id="UP000009136">
    <property type="component" value="Unplaced"/>
</dbReference>
<dbReference type="GO" id="GO:0005615">
    <property type="term" value="C:extracellular space"/>
    <property type="evidence" value="ECO:0000314"/>
    <property type="project" value="AgBase"/>
</dbReference>
<dbReference type="GO" id="GO:0005886">
    <property type="term" value="C:plasma membrane"/>
    <property type="evidence" value="ECO:0007669"/>
    <property type="project" value="UniProtKB-SubCell"/>
</dbReference>
<dbReference type="GO" id="GO:0005125">
    <property type="term" value="F:cytokine activity"/>
    <property type="evidence" value="ECO:0000318"/>
    <property type="project" value="GO_Central"/>
</dbReference>
<dbReference type="GO" id="GO:0005164">
    <property type="term" value="F:tumor necrosis factor receptor binding"/>
    <property type="evidence" value="ECO:0007669"/>
    <property type="project" value="InterPro"/>
</dbReference>
<dbReference type="GO" id="GO:0008625">
    <property type="term" value="P:extrinsic apoptotic signaling pathway via death domain receptors"/>
    <property type="evidence" value="ECO:0000318"/>
    <property type="project" value="GO_Central"/>
</dbReference>
<dbReference type="GO" id="GO:0006955">
    <property type="term" value="P:immune response"/>
    <property type="evidence" value="ECO:0000318"/>
    <property type="project" value="GO_Central"/>
</dbReference>
<dbReference type="GO" id="GO:0097527">
    <property type="term" value="P:necroptotic signaling pathway"/>
    <property type="evidence" value="ECO:0000250"/>
    <property type="project" value="CAFA"/>
</dbReference>
<dbReference type="GO" id="GO:2000252">
    <property type="term" value="P:negative regulation of feeding behavior"/>
    <property type="evidence" value="ECO:0000315"/>
    <property type="project" value="AgBase"/>
</dbReference>
<dbReference type="GO" id="GO:1903488">
    <property type="term" value="P:negative regulation of lactation"/>
    <property type="evidence" value="ECO:0000315"/>
    <property type="project" value="AgBase"/>
</dbReference>
<dbReference type="GO" id="GO:0043242">
    <property type="term" value="P:negative regulation of protein-containing complex disassembly"/>
    <property type="evidence" value="ECO:0000250"/>
    <property type="project" value="UniProtKB"/>
</dbReference>
<dbReference type="GO" id="GO:0043065">
    <property type="term" value="P:positive regulation of apoptotic process"/>
    <property type="evidence" value="ECO:0000250"/>
    <property type="project" value="UniProtKB"/>
</dbReference>
<dbReference type="GO" id="GO:0043123">
    <property type="term" value="P:positive regulation of canonical NF-kappaB signal transduction"/>
    <property type="evidence" value="ECO:0000318"/>
    <property type="project" value="GO_Central"/>
</dbReference>
<dbReference type="GO" id="GO:2001238">
    <property type="term" value="P:positive regulation of extrinsic apoptotic signaling pathway"/>
    <property type="evidence" value="ECO:0000318"/>
    <property type="project" value="GO_Central"/>
</dbReference>
<dbReference type="GO" id="GO:0050729">
    <property type="term" value="P:positive regulation of inflammatory response"/>
    <property type="evidence" value="ECO:0000315"/>
    <property type="project" value="AgBase"/>
</dbReference>
<dbReference type="GO" id="GO:0043507">
    <property type="term" value="P:positive regulation of JUN kinase activity"/>
    <property type="evidence" value="ECO:0000250"/>
    <property type="project" value="UniProtKB"/>
</dbReference>
<dbReference type="GO" id="GO:0043406">
    <property type="term" value="P:positive regulation of MAP kinase activity"/>
    <property type="evidence" value="ECO:0000250"/>
    <property type="project" value="UniProtKB"/>
</dbReference>
<dbReference type="GO" id="GO:0051092">
    <property type="term" value="P:positive regulation of NF-kappaB transcription factor activity"/>
    <property type="evidence" value="ECO:0000250"/>
    <property type="project" value="UniProtKB"/>
</dbReference>
<dbReference type="GO" id="GO:0010756">
    <property type="term" value="P:positive regulation of plasminogen activation"/>
    <property type="evidence" value="ECO:0000315"/>
    <property type="project" value="AgBase"/>
</dbReference>
<dbReference type="GO" id="GO:0001934">
    <property type="term" value="P:positive regulation of protein phosphorylation"/>
    <property type="evidence" value="ECO:0000250"/>
    <property type="project" value="UniProtKB"/>
</dbReference>
<dbReference type="GO" id="GO:0043243">
    <property type="term" value="P:positive regulation of protein-containing complex disassembly"/>
    <property type="evidence" value="ECO:0000250"/>
    <property type="project" value="UniProtKB"/>
</dbReference>
<dbReference type="GO" id="GO:0090208">
    <property type="term" value="P:positive regulation of triglyceride metabolic process"/>
    <property type="evidence" value="ECO:0000315"/>
    <property type="project" value="AgBase"/>
</dbReference>
<dbReference type="GO" id="GO:0002532">
    <property type="term" value="P:production of molecular mediator involved in inflammatory response"/>
    <property type="evidence" value="ECO:0000315"/>
    <property type="project" value="AgBase"/>
</dbReference>
<dbReference type="GO" id="GO:0033209">
    <property type="term" value="P:tumor necrosis factor-mediated signaling pathway"/>
    <property type="evidence" value="ECO:0000318"/>
    <property type="project" value="GO_Central"/>
</dbReference>
<dbReference type="GO" id="GO:0010573">
    <property type="term" value="P:vascular endothelial growth factor production"/>
    <property type="evidence" value="ECO:0000250"/>
    <property type="project" value="UniProtKB"/>
</dbReference>
<dbReference type="CDD" id="cd00184">
    <property type="entry name" value="TNF"/>
    <property type="match status" value="1"/>
</dbReference>
<dbReference type="FunFam" id="2.60.120.40:FF:000007">
    <property type="entry name" value="Tumor necrosis factor"/>
    <property type="match status" value="1"/>
</dbReference>
<dbReference type="Gene3D" id="2.60.120.40">
    <property type="match status" value="1"/>
</dbReference>
<dbReference type="InterPro" id="IPR006053">
    <property type="entry name" value="TNF"/>
</dbReference>
<dbReference type="InterPro" id="IPR002959">
    <property type="entry name" value="TNF_alpha"/>
</dbReference>
<dbReference type="InterPro" id="IPR021184">
    <property type="entry name" value="TNF_CS"/>
</dbReference>
<dbReference type="InterPro" id="IPR006052">
    <property type="entry name" value="TNF_dom"/>
</dbReference>
<dbReference type="InterPro" id="IPR008983">
    <property type="entry name" value="Tumour_necrosis_fac-like_dom"/>
</dbReference>
<dbReference type="PANTHER" id="PTHR11471:SF23">
    <property type="entry name" value="TUMOR NECROSIS FACTOR"/>
    <property type="match status" value="1"/>
</dbReference>
<dbReference type="PANTHER" id="PTHR11471">
    <property type="entry name" value="TUMOR NECROSIS FACTOR FAMILY MEMBER"/>
    <property type="match status" value="1"/>
</dbReference>
<dbReference type="Pfam" id="PF00229">
    <property type="entry name" value="TNF"/>
    <property type="match status" value="1"/>
</dbReference>
<dbReference type="PRINTS" id="PR01234">
    <property type="entry name" value="TNECROSISFCT"/>
</dbReference>
<dbReference type="PRINTS" id="PR01235">
    <property type="entry name" value="TNFALPHA"/>
</dbReference>
<dbReference type="SMART" id="SM00207">
    <property type="entry name" value="TNF"/>
    <property type="match status" value="1"/>
</dbReference>
<dbReference type="SUPFAM" id="SSF49842">
    <property type="entry name" value="TNF-like"/>
    <property type="match status" value="1"/>
</dbReference>
<dbReference type="PROSITE" id="PS00251">
    <property type="entry name" value="THD_1"/>
    <property type="match status" value="1"/>
</dbReference>
<dbReference type="PROSITE" id="PS50049">
    <property type="entry name" value="THD_2"/>
    <property type="match status" value="1"/>
</dbReference>